<protein>
    <recommendedName>
        <fullName>Uncharacterized kinase mug58</fullName>
        <ecNumber>2.7.-.-</ecNumber>
    </recommendedName>
    <alternativeName>
        <fullName>Meiotically up-regulated gene 58 protein</fullName>
    </alternativeName>
</protein>
<dbReference type="EC" id="2.7.-.-"/>
<dbReference type="EMBL" id="D89234">
    <property type="protein sequence ID" value="BAA13895.1"/>
    <property type="molecule type" value="mRNA"/>
</dbReference>
<dbReference type="EMBL" id="CU329670">
    <property type="protein sequence ID" value="CAB52731.1"/>
    <property type="molecule type" value="Genomic_DNA"/>
</dbReference>
<dbReference type="EMBL" id="AB027848">
    <property type="protein sequence ID" value="BAA87152.1"/>
    <property type="molecule type" value="Genomic_DNA"/>
</dbReference>
<dbReference type="PIR" id="T38987">
    <property type="entry name" value="T38987"/>
</dbReference>
<dbReference type="PIR" id="T43138">
    <property type="entry name" value="T43138"/>
</dbReference>
<dbReference type="RefSeq" id="NP_592905.1">
    <property type="nucleotide sequence ID" value="NM_001018305.2"/>
</dbReference>
<dbReference type="SMR" id="Q9UUH3"/>
<dbReference type="BioGRID" id="279803">
    <property type="interactions" value="12"/>
</dbReference>
<dbReference type="FunCoup" id="Q9UUH3">
    <property type="interactions" value="572"/>
</dbReference>
<dbReference type="STRING" id="284812.Q9UUH3"/>
<dbReference type="PaxDb" id="4896-SPAC630.09c.1"/>
<dbReference type="EnsemblFungi" id="SPAC630.09c.1">
    <property type="protein sequence ID" value="SPAC630.09c.1:pep"/>
    <property type="gene ID" value="SPAC630.09c"/>
</dbReference>
<dbReference type="GeneID" id="2543381"/>
<dbReference type="KEGG" id="spo:2543381"/>
<dbReference type="PomBase" id="SPAC630.09c">
    <property type="gene designation" value="mug58"/>
</dbReference>
<dbReference type="VEuPathDB" id="FungiDB:SPAC630.09c"/>
<dbReference type="eggNOG" id="KOG2878">
    <property type="taxonomic scope" value="Eukaryota"/>
</dbReference>
<dbReference type="HOGENOM" id="CLU_056986_1_0_1"/>
<dbReference type="InParanoid" id="Q9UUH3"/>
<dbReference type="OMA" id="TEYVYGW"/>
<dbReference type="PhylomeDB" id="Q9UUH3"/>
<dbReference type="PRO" id="PR:Q9UUH3"/>
<dbReference type="Proteomes" id="UP000002485">
    <property type="component" value="Chromosome I"/>
</dbReference>
<dbReference type="GO" id="GO:0005737">
    <property type="term" value="C:cytoplasm"/>
    <property type="evidence" value="ECO:0000318"/>
    <property type="project" value="GO_Central"/>
</dbReference>
<dbReference type="GO" id="GO:0005829">
    <property type="term" value="C:cytosol"/>
    <property type="evidence" value="ECO:0007005"/>
    <property type="project" value="PomBase"/>
</dbReference>
<dbReference type="GO" id="GO:0005634">
    <property type="term" value="C:nucleus"/>
    <property type="evidence" value="ECO:0007005"/>
    <property type="project" value="PomBase"/>
</dbReference>
<dbReference type="GO" id="GO:0005524">
    <property type="term" value="F:ATP binding"/>
    <property type="evidence" value="ECO:0007669"/>
    <property type="project" value="UniProtKB-KW"/>
</dbReference>
<dbReference type="GO" id="GO:0016301">
    <property type="term" value="F:kinase activity"/>
    <property type="evidence" value="ECO:0007669"/>
    <property type="project" value="UniProtKB-KW"/>
</dbReference>
<dbReference type="GO" id="GO:0051321">
    <property type="term" value="P:meiotic cell cycle"/>
    <property type="evidence" value="ECO:0007669"/>
    <property type="project" value="UniProtKB-KW"/>
</dbReference>
<dbReference type="FunFam" id="3.40.50.300:FF:001691">
    <property type="entry name" value="Probable ATP-dependent kinase TDA10"/>
    <property type="match status" value="1"/>
</dbReference>
<dbReference type="Gene3D" id="3.40.50.300">
    <property type="entry name" value="P-loop containing nucleotide triphosphate hydrolases"/>
    <property type="match status" value="1"/>
</dbReference>
<dbReference type="InterPro" id="IPR027417">
    <property type="entry name" value="P-loop_NTPase"/>
</dbReference>
<dbReference type="InterPro" id="IPR010488">
    <property type="entry name" value="Zeta_toxin_domain"/>
</dbReference>
<dbReference type="PANTHER" id="PTHR10285">
    <property type="entry name" value="URIDINE KINASE"/>
    <property type="match status" value="1"/>
</dbReference>
<dbReference type="Pfam" id="PF06414">
    <property type="entry name" value="Zeta_toxin"/>
    <property type="match status" value="1"/>
</dbReference>
<dbReference type="SUPFAM" id="SSF52540">
    <property type="entry name" value="P-loop containing nucleoside triphosphate hydrolases"/>
    <property type="match status" value="1"/>
</dbReference>
<keyword id="KW-0067">ATP-binding</keyword>
<keyword id="KW-0963">Cytoplasm</keyword>
<keyword id="KW-0418">Kinase</keyword>
<keyword id="KW-0469">Meiosis</keyword>
<keyword id="KW-0547">Nucleotide-binding</keyword>
<keyword id="KW-0539">Nucleus</keyword>
<keyword id="KW-1185">Reference proteome</keyword>
<keyword id="KW-0808">Transferase</keyword>
<evidence type="ECO:0000250" key="1">
    <source>
        <dbReference type="UniProtKB" id="Q97QZ1"/>
    </source>
</evidence>
<evidence type="ECO:0000269" key="2">
    <source>
    </source>
</evidence>
<evidence type="ECO:0000305" key="3"/>
<proteinExistence type="evidence at protein level"/>
<comment type="function">
    <text evidence="2">Has a role in meiosis.</text>
</comment>
<comment type="subcellular location">
    <subcellularLocation>
        <location>Cytoplasm</location>
    </subcellularLocation>
    <subcellularLocation>
        <location>Nucleus</location>
    </subcellularLocation>
</comment>
<comment type="similarity">
    <text evidence="3">Belongs to the GLYK kinase family.</text>
</comment>
<gene>
    <name type="primary">mug58</name>
    <name type="ORF">SPAC630.09c</name>
</gene>
<reference key="1">
    <citation type="journal article" date="1997" name="DNA Res.">
        <title>Identification of open reading frames in Schizosaccharomyces pombe cDNAs.</title>
        <authorList>
            <person name="Yoshioka S."/>
            <person name="Kato K."/>
            <person name="Nakai K."/>
            <person name="Okayama H."/>
            <person name="Nojima H."/>
        </authorList>
    </citation>
    <scope>NUCLEOTIDE SEQUENCE [LARGE SCALE MRNA]</scope>
    <source>
        <strain>PR745</strain>
    </source>
</reference>
<reference key="2">
    <citation type="journal article" date="2002" name="Nature">
        <title>The genome sequence of Schizosaccharomyces pombe.</title>
        <authorList>
            <person name="Wood V."/>
            <person name="Gwilliam R."/>
            <person name="Rajandream M.A."/>
            <person name="Lyne M.H."/>
            <person name="Lyne R."/>
            <person name="Stewart A."/>
            <person name="Sgouros J.G."/>
            <person name="Peat N."/>
            <person name="Hayles J."/>
            <person name="Baker S.G."/>
            <person name="Basham D."/>
            <person name="Bowman S."/>
            <person name="Brooks K."/>
            <person name="Brown D."/>
            <person name="Brown S."/>
            <person name="Chillingworth T."/>
            <person name="Churcher C.M."/>
            <person name="Collins M."/>
            <person name="Connor R."/>
            <person name="Cronin A."/>
            <person name="Davis P."/>
            <person name="Feltwell T."/>
            <person name="Fraser A."/>
            <person name="Gentles S."/>
            <person name="Goble A."/>
            <person name="Hamlin N."/>
            <person name="Harris D.E."/>
            <person name="Hidalgo J."/>
            <person name="Hodgson G."/>
            <person name="Holroyd S."/>
            <person name="Hornsby T."/>
            <person name="Howarth S."/>
            <person name="Huckle E.J."/>
            <person name="Hunt S."/>
            <person name="Jagels K."/>
            <person name="James K.D."/>
            <person name="Jones L."/>
            <person name="Jones M."/>
            <person name="Leather S."/>
            <person name="McDonald S."/>
            <person name="McLean J."/>
            <person name="Mooney P."/>
            <person name="Moule S."/>
            <person name="Mungall K.L."/>
            <person name="Murphy L.D."/>
            <person name="Niblett D."/>
            <person name="Odell C."/>
            <person name="Oliver K."/>
            <person name="O'Neil S."/>
            <person name="Pearson D."/>
            <person name="Quail M.A."/>
            <person name="Rabbinowitsch E."/>
            <person name="Rutherford K.M."/>
            <person name="Rutter S."/>
            <person name="Saunders D."/>
            <person name="Seeger K."/>
            <person name="Sharp S."/>
            <person name="Skelton J."/>
            <person name="Simmonds M.N."/>
            <person name="Squares R."/>
            <person name="Squares S."/>
            <person name="Stevens K."/>
            <person name="Taylor K."/>
            <person name="Taylor R.G."/>
            <person name="Tivey A."/>
            <person name="Walsh S.V."/>
            <person name="Warren T."/>
            <person name="Whitehead S."/>
            <person name="Woodward J.R."/>
            <person name="Volckaert G."/>
            <person name="Aert R."/>
            <person name="Robben J."/>
            <person name="Grymonprez B."/>
            <person name="Weltjens I."/>
            <person name="Vanstreels E."/>
            <person name="Rieger M."/>
            <person name="Schaefer M."/>
            <person name="Mueller-Auer S."/>
            <person name="Gabel C."/>
            <person name="Fuchs M."/>
            <person name="Duesterhoeft A."/>
            <person name="Fritzc C."/>
            <person name="Holzer E."/>
            <person name="Moestl D."/>
            <person name="Hilbert H."/>
            <person name="Borzym K."/>
            <person name="Langer I."/>
            <person name="Beck A."/>
            <person name="Lehrach H."/>
            <person name="Reinhardt R."/>
            <person name="Pohl T.M."/>
            <person name="Eger P."/>
            <person name="Zimmermann W."/>
            <person name="Wedler H."/>
            <person name="Wambutt R."/>
            <person name="Purnelle B."/>
            <person name="Goffeau A."/>
            <person name="Cadieu E."/>
            <person name="Dreano S."/>
            <person name="Gloux S."/>
            <person name="Lelaure V."/>
            <person name="Mottier S."/>
            <person name="Galibert F."/>
            <person name="Aves S.J."/>
            <person name="Xiang Z."/>
            <person name="Hunt C."/>
            <person name="Moore K."/>
            <person name="Hurst S.M."/>
            <person name="Lucas M."/>
            <person name="Rochet M."/>
            <person name="Gaillardin C."/>
            <person name="Tallada V.A."/>
            <person name="Garzon A."/>
            <person name="Thode G."/>
            <person name="Daga R.R."/>
            <person name="Cruzado L."/>
            <person name="Jimenez J."/>
            <person name="Sanchez M."/>
            <person name="del Rey F."/>
            <person name="Benito J."/>
            <person name="Dominguez A."/>
            <person name="Revuelta J.L."/>
            <person name="Moreno S."/>
            <person name="Armstrong J."/>
            <person name="Forsburg S.L."/>
            <person name="Cerutti L."/>
            <person name="Lowe T."/>
            <person name="McCombie W.R."/>
            <person name="Paulsen I."/>
            <person name="Potashkin J."/>
            <person name="Shpakovski G.V."/>
            <person name="Ussery D."/>
            <person name="Barrell B.G."/>
            <person name="Nurse P."/>
        </authorList>
    </citation>
    <scope>NUCLEOTIDE SEQUENCE [LARGE SCALE GENOMIC DNA]</scope>
    <source>
        <strain>972 / ATCC 24843</strain>
    </source>
</reference>
<reference key="3">
    <citation type="journal article" date="2000" name="Genes Cells">
        <title>Large-scale screening of intracellular protein localization in living fission yeast cells by the use of a GFP-fusion genomic DNA library.</title>
        <authorList>
            <person name="Ding D.-Q."/>
            <person name="Tomita Y."/>
            <person name="Yamamoto A."/>
            <person name="Chikashige Y."/>
            <person name="Haraguchi T."/>
            <person name="Hiraoka Y."/>
        </authorList>
    </citation>
    <scope>NUCLEOTIDE SEQUENCE [LARGE SCALE GENOMIC DNA] OF 75-225</scope>
    <scope>SUBCELLULAR LOCATION</scope>
    <source>
        <strain>ATCC 38364 / 968</strain>
    </source>
</reference>
<reference key="4">
    <citation type="journal article" date="2005" name="Curr. Biol.">
        <title>A large-scale screen in S. pombe identifies seven novel genes required for critical meiotic events.</title>
        <authorList>
            <person name="Martin-Castellanos C."/>
            <person name="Blanco M."/>
            <person name="Rozalen A.E."/>
            <person name="Perez-Hidalgo L."/>
            <person name="Garcia A.I."/>
            <person name="Conde F."/>
            <person name="Mata J."/>
            <person name="Ellermeier C."/>
            <person name="Davis L."/>
            <person name="San-Segundo P."/>
            <person name="Smith G.R."/>
            <person name="Moreno S."/>
        </authorList>
    </citation>
    <scope>FUNCTION IN MEIOSIS</scope>
</reference>
<reference key="5">
    <citation type="journal article" date="2006" name="Nat. Biotechnol.">
        <title>ORFeome cloning and global analysis of protein localization in the fission yeast Schizosaccharomyces pombe.</title>
        <authorList>
            <person name="Matsuyama A."/>
            <person name="Arai R."/>
            <person name="Yashiroda Y."/>
            <person name="Shirai A."/>
            <person name="Kamata A."/>
            <person name="Sekido S."/>
            <person name="Kobayashi Y."/>
            <person name="Hashimoto A."/>
            <person name="Hamamoto M."/>
            <person name="Hiraoka Y."/>
            <person name="Horinouchi S."/>
            <person name="Yoshida M."/>
        </authorList>
    </citation>
    <scope>SUBCELLULAR LOCATION [LARGE SCALE ANALYSIS]</scope>
</reference>
<accession>Q9UUH3</accession>
<accession>P78883</accession>
<accession>Q9UU30</accession>
<name>MUG58_SCHPO</name>
<organism>
    <name type="scientific">Schizosaccharomyces pombe (strain 972 / ATCC 24843)</name>
    <name type="common">Fission yeast</name>
    <dbReference type="NCBI Taxonomy" id="284812"/>
    <lineage>
        <taxon>Eukaryota</taxon>
        <taxon>Fungi</taxon>
        <taxon>Dikarya</taxon>
        <taxon>Ascomycota</taxon>
        <taxon>Taphrinomycotina</taxon>
        <taxon>Schizosaccharomycetes</taxon>
        <taxon>Schizosaccharomycetales</taxon>
        <taxon>Schizosaccharomycetaceae</taxon>
        <taxon>Schizosaccharomyces</taxon>
    </lineage>
</organism>
<sequence length="277" mass="31809">MSSLEIIVDKILKFLEKQPKPEGRPFILGISGPQGSGKSTLASALDTELTRKNESVVKFSLDDFYLTHAEQVELAKNNPNNPLVQHRGLAGTHDVTFLNNVLNAFVKGSDEEVSIPFYDKSKFGGYGDRGDESQWKKANPKTTTYVIFEGWMVGFEPLDSCMLSVRARSTRWQNIEGSLLWVNRKLADYQPIFQKIDSLVELEAQEINYVYRWRLQQEHALKARIHKGMSDEEVIEFVNHYMPQYVFYLGTLSNKVHLNPHCLEIILDENRYPVVMH</sequence>
<feature type="chain" id="PRO_0000214077" description="Uncharacterized kinase mug58">
    <location>
        <begin position="1"/>
        <end position="277"/>
    </location>
</feature>
<feature type="binding site" evidence="1">
    <location>
        <begin position="32"/>
        <end position="39"/>
    </location>
    <ligand>
        <name>ATP</name>
        <dbReference type="ChEBI" id="CHEBI:30616"/>
    </ligand>
</feature>
<feature type="sequence conflict" description="In Ref. 1; BAA13895." evidence="3" ref="1">
    <original>K</original>
    <variation>Q</variation>
    <location>
        <position position="120"/>
    </location>
</feature>